<keyword id="KW-0131">Cell cycle</keyword>
<keyword id="KW-0132">Cell division</keyword>
<keyword id="KW-0143">Chaperone</keyword>
<keyword id="KW-0963">Cytoplasm</keyword>
<keyword id="KW-0413">Isomerase</keyword>
<keyword id="KW-1185">Reference proteome</keyword>
<keyword id="KW-0697">Rotamase</keyword>
<proteinExistence type="inferred from homology"/>
<dbReference type="EC" id="5.2.1.8" evidence="1"/>
<dbReference type="EMBL" id="CP000002">
    <property type="protein sequence ID" value="AAU24459.1"/>
    <property type="molecule type" value="Genomic_DNA"/>
</dbReference>
<dbReference type="EMBL" id="AE017333">
    <property type="protein sequence ID" value="AAU41821.1"/>
    <property type="molecule type" value="Genomic_DNA"/>
</dbReference>
<dbReference type="RefSeq" id="WP_011198167.1">
    <property type="nucleotide sequence ID" value="NC_006322.1"/>
</dbReference>
<dbReference type="SMR" id="Q65GJ3"/>
<dbReference type="STRING" id="279010.BL00617"/>
<dbReference type="GeneID" id="92860453"/>
<dbReference type="KEGG" id="bld:BLi02953"/>
<dbReference type="KEGG" id="bli:BL00617"/>
<dbReference type="PATRIC" id="fig|279010.13.peg.3013"/>
<dbReference type="eggNOG" id="COG0544">
    <property type="taxonomic scope" value="Bacteria"/>
</dbReference>
<dbReference type="HOGENOM" id="CLU_033058_3_2_9"/>
<dbReference type="Proteomes" id="UP000000606">
    <property type="component" value="Chromosome"/>
</dbReference>
<dbReference type="GO" id="GO:0005737">
    <property type="term" value="C:cytoplasm"/>
    <property type="evidence" value="ECO:0007669"/>
    <property type="project" value="UniProtKB-SubCell"/>
</dbReference>
<dbReference type="GO" id="GO:0003755">
    <property type="term" value="F:peptidyl-prolyl cis-trans isomerase activity"/>
    <property type="evidence" value="ECO:0007669"/>
    <property type="project" value="UniProtKB-UniRule"/>
</dbReference>
<dbReference type="GO" id="GO:0044183">
    <property type="term" value="F:protein folding chaperone"/>
    <property type="evidence" value="ECO:0007669"/>
    <property type="project" value="TreeGrafter"/>
</dbReference>
<dbReference type="GO" id="GO:0043022">
    <property type="term" value="F:ribosome binding"/>
    <property type="evidence" value="ECO:0007669"/>
    <property type="project" value="TreeGrafter"/>
</dbReference>
<dbReference type="GO" id="GO:0051083">
    <property type="term" value="P:'de novo' cotranslational protein folding"/>
    <property type="evidence" value="ECO:0007669"/>
    <property type="project" value="TreeGrafter"/>
</dbReference>
<dbReference type="GO" id="GO:0051301">
    <property type="term" value="P:cell division"/>
    <property type="evidence" value="ECO:0007669"/>
    <property type="project" value="UniProtKB-KW"/>
</dbReference>
<dbReference type="GO" id="GO:0061077">
    <property type="term" value="P:chaperone-mediated protein folding"/>
    <property type="evidence" value="ECO:0007669"/>
    <property type="project" value="TreeGrafter"/>
</dbReference>
<dbReference type="GO" id="GO:0015031">
    <property type="term" value="P:protein transport"/>
    <property type="evidence" value="ECO:0007669"/>
    <property type="project" value="UniProtKB-UniRule"/>
</dbReference>
<dbReference type="GO" id="GO:0043335">
    <property type="term" value="P:protein unfolding"/>
    <property type="evidence" value="ECO:0007669"/>
    <property type="project" value="TreeGrafter"/>
</dbReference>
<dbReference type="FunFam" id="3.10.50.40:FF:000001">
    <property type="entry name" value="Trigger factor"/>
    <property type="match status" value="1"/>
</dbReference>
<dbReference type="FunFam" id="3.30.70.1050:FF:000002">
    <property type="entry name" value="Trigger factor"/>
    <property type="match status" value="1"/>
</dbReference>
<dbReference type="Gene3D" id="3.10.50.40">
    <property type="match status" value="1"/>
</dbReference>
<dbReference type="Gene3D" id="3.30.70.1050">
    <property type="entry name" value="Trigger factor ribosome-binding domain"/>
    <property type="match status" value="1"/>
</dbReference>
<dbReference type="Gene3D" id="1.10.3120.10">
    <property type="entry name" value="Trigger factor, C-terminal domain"/>
    <property type="match status" value="1"/>
</dbReference>
<dbReference type="HAMAP" id="MF_00303">
    <property type="entry name" value="Trigger_factor_Tig"/>
    <property type="match status" value="1"/>
</dbReference>
<dbReference type="InterPro" id="IPR046357">
    <property type="entry name" value="PPIase_dom_sf"/>
</dbReference>
<dbReference type="InterPro" id="IPR001179">
    <property type="entry name" value="PPIase_FKBP_dom"/>
</dbReference>
<dbReference type="InterPro" id="IPR005215">
    <property type="entry name" value="Trig_fac"/>
</dbReference>
<dbReference type="InterPro" id="IPR008880">
    <property type="entry name" value="Trigger_fac_C"/>
</dbReference>
<dbReference type="InterPro" id="IPR037041">
    <property type="entry name" value="Trigger_fac_C_sf"/>
</dbReference>
<dbReference type="InterPro" id="IPR008881">
    <property type="entry name" value="Trigger_fac_ribosome-bd_bac"/>
</dbReference>
<dbReference type="InterPro" id="IPR036611">
    <property type="entry name" value="Trigger_fac_ribosome-bd_sf"/>
</dbReference>
<dbReference type="InterPro" id="IPR027304">
    <property type="entry name" value="Trigger_fact/SurA_dom_sf"/>
</dbReference>
<dbReference type="NCBIfam" id="TIGR00115">
    <property type="entry name" value="tig"/>
    <property type="match status" value="1"/>
</dbReference>
<dbReference type="PANTHER" id="PTHR30560">
    <property type="entry name" value="TRIGGER FACTOR CHAPERONE AND PEPTIDYL-PROLYL CIS/TRANS ISOMERASE"/>
    <property type="match status" value="1"/>
</dbReference>
<dbReference type="PANTHER" id="PTHR30560:SF3">
    <property type="entry name" value="TRIGGER FACTOR-LIKE PROTEIN TIG, CHLOROPLASTIC"/>
    <property type="match status" value="1"/>
</dbReference>
<dbReference type="Pfam" id="PF00254">
    <property type="entry name" value="FKBP_C"/>
    <property type="match status" value="1"/>
</dbReference>
<dbReference type="Pfam" id="PF05698">
    <property type="entry name" value="Trigger_C"/>
    <property type="match status" value="1"/>
</dbReference>
<dbReference type="Pfam" id="PF05697">
    <property type="entry name" value="Trigger_N"/>
    <property type="match status" value="1"/>
</dbReference>
<dbReference type="PIRSF" id="PIRSF003095">
    <property type="entry name" value="Trigger_factor"/>
    <property type="match status" value="1"/>
</dbReference>
<dbReference type="SUPFAM" id="SSF54534">
    <property type="entry name" value="FKBP-like"/>
    <property type="match status" value="1"/>
</dbReference>
<dbReference type="SUPFAM" id="SSF109998">
    <property type="entry name" value="Triger factor/SurA peptide-binding domain-like"/>
    <property type="match status" value="1"/>
</dbReference>
<dbReference type="SUPFAM" id="SSF102735">
    <property type="entry name" value="Trigger factor ribosome-binding domain"/>
    <property type="match status" value="1"/>
</dbReference>
<dbReference type="PROSITE" id="PS50059">
    <property type="entry name" value="FKBP_PPIASE"/>
    <property type="match status" value="1"/>
</dbReference>
<reference key="1">
    <citation type="journal article" date="2004" name="J. Mol. Microbiol. Biotechnol.">
        <title>The complete genome sequence of Bacillus licheniformis DSM13, an organism with great industrial potential.</title>
        <authorList>
            <person name="Veith B."/>
            <person name="Herzberg C."/>
            <person name="Steckel S."/>
            <person name="Feesche J."/>
            <person name="Maurer K.H."/>
            <person name="Ehrenreich P."/>
            <person name="Baeumer S."/>
            <person name="Henne A."/>
            <person name="Liesegang H."/>
            <person name="Merkl R."/>
            <person name="Ehrenreich A."/>
            <person name="Gottschalk G."/>
        </authorList>
    </citation>
    <scope>NUCLEOTIDE SEQUENCE [LARGE SCALE GENOMIC DNA]</scope>
    <source>
        <strain>ATCC 14580 / DSM 13 / JCM 2505 / CCUG 7422 / NBRC 12200 / NCIMB 9375 / NCTC 10341 / NRRL NRS-1264 / Gibson 46</strain>
    </source>
</reference>
<reference key="2">
    <citation type="journal article" date="2004" name="Genome Biol.">
        <title>Complete genome sequence of the industrial bacterium Bacillus licheniformis and comparisons with closely related Bacillus species.</title>
        <authorList>
            <person name="Rey M.W."/>
            <person name="Ramaiya P."/>
            <person name="Nelson B.A."/>
            <person name="Brody-Karpin S.D."/>
            <person name="Zaretsky E.J."/>
            <person name="Tang M."/>
            <person name="Lopez de Leon A."/>
            <person name="Xiang H."/>
            <person name="Gusti V."/>
            <person name="Clausen I.G."/>
            <person name="Olsen P.B."/>
            <person name="Rasmussen M.D."/>
            <person name="Andersen J.T."/>
            <person name="Joergensen P.L."/>
            <person name="Larsen T.S."/>
            <person name="Sorokin A."/>
            <person name="Bolotin A."/>
            <person name="Lapidus A."/>
            <person name="Galleron N."/>
            <person name="Ehrlich S.D."/>
            <person name="Berka R.M."/>
        </authorList>
    </citation>
    <scope>NUCLEOTIDE SEQUENCE [LARGE SCALE GENOMIC DNA]</scope>
    <source>
        <strain>ATCC 14580 / DSM 13 / JCM 2505 / CCUG 7422 / NBRC 12200 / NCIMB 9375 / NCTC 10341 / NRRL NRS-1264 / Gibson 46</strain>
    </source>
</reference>
<comment type="function">
    <text evidence="1">Involved in protein export. Acts as a chaperone by maintaining the newly synthesized protein in an open conformation. Functions as a peptidyl-prolyl cis-trans isomerase.</text>
</comment>
<comment type="catalytic activity">
    <reaction evidence="1">
        <text>[protein]-peptidylproline (omega=180) = [protein]-peptidylproline (omega=0)</text>
        <dbReference type="Rhea" id="RHEA:16237"/>
        <dbReference type="Rhea" id="RHEA-COMP:10747"/>
        <dbReference type="Rhea" id="RHEA-COMP:10748"/>
        <dbReference type="ChEBI" id="CHEBI:83833"/>
        <dbReference type="ChEBI" id="CHEBI:83834"/>
        <dbReference type="EC" id="5.2.1.8"/>
    </reaction>
</comment>
<comment type="subcellular location">
    <subcellularLocation>
        <location>Cytoplasm</location>
    </subcellularLocation>
    <text evidence="1">About half TF is bound to the ribosome near the polypeptide exit tunnel while the other half is free in the cytoplasm.</text>
</comment>
<comment type="domain">
    <text evidence="1">Consists of 3 domains; the N-terminus binds the ribosome, the middle domain has PPIase activity, while the C-terminus has intrinsic chaperone activity on its own.</text>
</comment>
<comment type="similarity">
    <text evidence="1">Belongs to the FKBP-type PPIase family. Tig subfamily.</text>
</comment>
<feature type="chain" id="PRO_0000179311" description="Trigger factor">
    <location>
        <begin position="1"/>
        <end position="424"/>
    </location>
</feature>
<feature type="domain" description="PPIase FKBP-type" evidence="1">
    <location>
        <begin position="163"/>
        <end position="248"/>
    </location>
</feature>
<gene>
    <name evidence="1" type="primary">tig</name>
    <name type="ordered locus">BLi02953</name>
    <name type="ordered locus">BL00617</name>
</gene>
<sequence length="424" mass="47591">MSVKWEKQEGNEGVLTVEVDADTFNKALDDAFKKVVKQVSIPGFRKGKVPRGLFEQRFGVEALYQDALDILLPVEYPKAVEEAGIEPVDRPEIDVEKIEKGENLIFTAKVTVKPEVKLGEYKGLGIEKDDTAVTDEDVQNELKSLQERQAELVVKEDGKVEEGDTVVLDFEGFVDGEAFEGGKAENYSLEVGSGSFIPGFEDQLVGLEAGAEKDVEVTFPEEYHAEELAGKPAVFKVKIHEIKAKELPELDDEFAKDVDEEVGTLAELTEKTKKRLEEAKENEADAKLREELVLKAAENAEADIPQAMIDTELDRMMKEFEQRLQMQGMNLELYFQFSGQDENALKEQMKEDAEKRVKSNLTLEAIAKAENLQVTDEEVEEELSKMAEAYNMPVENIKQAIGSTDGMKEDLKVRKAIDFLVENR</sequence>
<protein>
    <recommendedName>
        <fullName evidence="1">Trigger factor</fullName>
        <shortName evidence="1">TF</shortName>
        <ecNumber evidence="1">5.2.1.8</ecNumber>
    </recommendedName>
    <alternativeName>
        <fullName evidence="1">PPIase</fullName>
    </alternativeName>
</protein>
<organism>
    <name type="scientific">Bacillus licheniformis (strain ATCC 14580 / DSM 13 / JCM 2505 / CCUG 7422 / NBRC 12200 / NCIMB 9375 / NCTC 10341 / NRRL NRS-1264 / Gibson 46)</name>
    <dbReference type="NCBI Taxonomy" id="279010"/>
    <lineage>
        <taxon>Bacteria</taxon>
        <taxon>Bacillati</taxon>
        <taxon>Bacillota</taxon>
        <taxon>Bacilli</taxon>
        <taxon>Bacillales</taxon>
        <taxon>Bacillaceae</taxon>
        <taxon>Bacillus</taxon>
    </lineage>
</organism>
<name>TIG_BACLD</name>
<accession>Q65GJ3</accession>
<accession>Q62S01</accession>
<evidence type="ECO:0000255" key="1">
    <source>
        <dbReference type="HAMAP-Rule" id="MF_00303"/>
    </source>
</evidence>